<evidence type="ECO:0000250" key="1">
    <source>
        <dbReference type="UniProtKB" id="Q6DCQ1"/>
    </source>
</evidence>
<evidence type="ECO:0000250" key="2">
    <source>
        <dbReference type="UniProtKB" id="Q9BZI1"/>
    </source>
</evidence>
<evidence type="ECO:0000255" key="3"/>
<evidence type="ECO:0000255" key="4">
    <source>
        <dbReference type="PROSITE-ProRule" id="PRU00108"/>
    </source>
</evidence>
<evidence type="ECO:0000256" key="5">
    <source>
        <dbReference type="SAM" id="MobiDB-lite"/>
    </source>
</evidence>
<evidence type="ECO:0000269" key="6">
    <source>
    </source>
</evidence>
<evidence type="ECO:0000305" key="7"/>
<evidence type="ECO:0000312" key="8">
    <source>
        <dbReference type="EMBL" id="AAH81317.1"/>
    </source>
</evidence>
<feature type="chain" id="PRO_0000388717" description="Iroquois-class homeodomain protein irx-2">
    <location>
        <begin position="1"/>
        <end position="456"/>
    </location>
</feature>
<feature type="DNA-binding region" description="Homeobox; TALE-type" evidence="4">
    <location>
        <begin position="110"/>
        <end position="172"/>
    </location>
</feature>
<feature type="region of interest" description="Disordered" evidence="5">
    <location>
        <begin position="172"/>
        <end position="214"/>
    </location>
</feature>
<feature type="region of interest" description="Disordered" evidence="5">
    <location>
        <begin position="246"/>
        <end position="320"/>
    </location>
</feature>
<feature type="region of interest" description="Disordered" evidence="5">
    <location>
        <begin position="434"/>
        <end position="456"/>
    </location>
</feature>
<feature type="compositionally biased region" description="Basic and acidic residues" evidence="5">
    <location>
        <begin position="192"/>
        <end position="205"/>
    </location>
</feature>
<feature type="compositionally biased region" description="Basic and acidic residues" evidence="5">
    <location>
        <begin position="246"/>
        <end position="256"/>
    </location>
</feature>
<feature type="compositionally biased region" description="Acidic residues" evidence="5">
    <location>
        <begin position="257"/>
        <end position="269"/>
    </location>
</feature>
<feature type="compositionally biased region" description="Polar residues" evidence="5">
    <location>
        <begin position="291"/>
        <end position="318"/>
    </location>
</feature>
<keyword id="KW-0217">Developmental protein</keyword>
<keyword id="KW-0221">Differentiation</keyword>
<keyword id="KW-0238">DNA-binding</keyword>
<keyword id="KW-0371">Homeobox</keyword>
<keyword id="KW-0524">Neurogenesis</keyword>
<keyword id="KW-0539">Nucleus</keyword>
<keyword id="KW-1185">Reference proteome</keyword>
<keyword id="KW-0804">Transcription</keyword>
<keyword id="KW-0805">Transcription regulation</keyword>
<dbReference type="EMBL" id="BC081317">
    <property type="protein sequence ID" value="AAH81317.1"/>
    <property type="molecule type" value="mRNA"/>
</dbReference>
<dbReference type="RefSeq" id="NP_001008113.1">
    <property type="nucleotide sequence ID" value="NM_001008112.1"/>
</dbReference>
<dbReference type="SMR" id="Q66IK1"/>
<dbReference type="FunCoup" id="Q66IK1">
    <property type="interactions" value="870"/>
</dbReference>
<dbReference type="STRING" id="8364.ENSXETP00000016596"/>
<dbReference type="PaxDb" id="8364-ENSXETP00000027698"/>
<dbReference type="DNASU" id="493475"/>
<dbReference type="GeneID" id="493475"/>
<dbReference type="KEGG" id="xtr:493475"/>
<dbReference type="AGR" id="Xenbase:XB-GENE-480618"/>
<dbReference type="CTD" id="153572"/>
<dbReference type="Xenbase" id="XB-GENE-480618">
    <property type="gene designation" value="irx2"/>
</dbReference>
<dbReference type="eggNOG" id="KOG0773">
    <property type="taxonomic scope" value="Eukaryota"/>
</dbReference>
<dbReference type="HOGENOM" id="CLU_048118_1_0_1"/>
<dbReference type="InParanoid" id="Q66IK1"/>
<dbReference type="OMA" id="HPHEDAS"/>
<dbReference type="OrthoDB" id="5399138at2759"/>
<dbReference type="PhylomeDB" id="Q66IK1"/>
<dbReference type="TreeFam" id="TF319371"/>
<dbReference type="Proteomes" id="UP000008143">
    <property type="component" value="Chromosome 6"/>
</dbReference>
<dbReference type="Bgee" id="ENSXETG00000012653">
    <property type="expression patterns" value="Expressed in heart and 13 other cell types or tissues"/>
</dbReference>
<dbReference type="GO" id="GO:0005634">
    <property type="term" value="C:nucleus"/>
    <property type="evidence" value="ECO:0000250"/>
    <property type="project" value="UniProtKB"/>
</dbReference>
<dbReference type="GO" id="GO:0003677">
    <property type="term" value="F:DNA binding"/>
    <property type="evidence" value="ECO:0007669"/>
    <property type="project" value="UniProtKB-KW"/>
</dbReference>
<dbReference type="GO" id="GO:0000981">
    <property type="term" value="F:DNA-binding transcription factor activity, RNA polymerase II-specific"/>
    <property type="evidence" value="ECO:0007669"/>
    <property type="project" value="InterPro"/>
</dbReference>
<dbReference type="GO" id="GO:0007420">
    <property type="term" value="P:brain development"/>
    <property type="evidence" value="ECO:0000250"/>
    <property type="project" value="UniProtKB"/>
</dbReference>
<dbReference type="GO" id="GO:0030154">
    <property type="term" value="P:cell differentiation"/>
    <property type="evidence" value="ECO:0007669"/>
    <property type="project" value="UniProtKB-KW"/>
</dbReference>
<dbReference type="GO" id="GO:0009953">
    <property type="term" value="P:dorsal/ventral pattern formation"/>
    <property type="evidence" value="ECO:0000250"/>
    <property type="project" value="UniProtKB"/>
</dbReference>
<dbReference type="GO" id="GO:0045665">
    <property type="term" value="P:negative regulation of neuron differentiation"/>
    <property type="evidence" value="ECO:0000250"/>
    <property type="project" value="UniProtKB"/>
</dbReference>
<dbReference type="GO" id="GO:0001840">
    <property type="term" value="P:neural plate development"/>
    <property type="evidence" value="ECO:0000250"/>
    <property type="project" value="UniProtKB"/>
</dbReference>
<dbReference type="GO" id="GO:0045893">
    <property type="term" value="P:positive regulation of DNA-templated transcription"/>
    <property type="evidence" value="ECO:0000250"/>
    <property type="project" value="UniProtKB"/>
</dbReference>
<dbReference type="GO" id="GO:0045666">
    <property type="term" value="P:positive regulation of neuron differentiation"/>
    <property type="evidence" value="ECO:0000250"/>
    <property type="project" value="UniProtKB"/>
</dbReference>
<dbReference type="GO" id="GO:0045944">
    <property type="term" value="P:positive regulation of transcription by RNA polymerase II"/>
    <property type="evidence" value="ECO:0000250"/>
    <property type="project" value="UniProtKB"/>
</dbReference>
<dbReference type="GO" id="GO:0009954">
    <property type="term" value="P:proximal/distal pattern formation"/>
    <property type="evidence" value="ECO:0000250"/>
    <property type="project" value="UniProtKB"/>
</dbReference>
<dbReference type="CDD" id="cd00086">
    <property type="entry name" value="homeodomain"/>
    <property type="match status" value="1"/>
</dbReference>
<dbReference type="FunFam" id="1.10.10.60:FF:000003">
    <property type="entry name" value="Iroquois-class homeobox protein IRX"/>
    <property type="match status" value="1"/>
</dbReference>
<dbReference type="Gene3D" id="1.10.10.60">
    <property type="entry name" value="Homeodomain-like"/>
    <property type="match status" value="1"/>
</dbReference>
<dbReference type="InterPro" id="IPR001356">
    <property type="entry name" value="HD"/>
</dbReference>
<dbReference type="InterPro" id="IPR017970">
    <property type="entry name" value="Homeobox_CS"/>
</dbReference>
<dbReference type="InterPro" id="IPR009057">
    <property type="entry name" value="Homeodomain-like_sf"/>
</dbReference>
<dbReference type="InterPro" id="IPR003893">
    <property type="entry name" value="Iroquois_homeo"/>
</dbReference>
<dbReference type="InterPro" id="IPR008422">
    <property type="entry name" value="KN_HD"/>
</dbReference>
<dbReference type="PANTHER" id="PTHR11211">
    <property type="entry name" value="IROQUOIS-CLASS HOMEODOMAIN PROTEIN IRX"/>
    <property type="match status" value="1"/>
</dbReference>
<dbReference type="PANTHER" id="PTHR11211:SF15">
    <property type="entry name" value="IROQUOIS-CLASS HOMEODOMAIN PROTEIN IRX-2"/>
    <property type="match status" value="1"/>
</dbReference>
<dbReference type="Pfam" id="PF05920">
    <property type="entry name" value="Homeobox_KN"/>
    <property type="match status" value="1"/>
</dbReference>
<dbReference type="SMART" id="SM00389">
    <property type="entry name" value="HOX"/>
    <property type="match status" value="1"/>
</dbReference>
<dbReference type="SMART" id="SM00548">
    <property type="entry name" value="IRO"/>
    <property type="match status" value="1"/>
</dbReference>
<dbReference type="SUPFAM" id="SSF46689">
    <property type="entry name" value="Homeodomain-like"/>
    <property type="match status" value="1"/>
</dbReference>
<dbReference type="PROSITE" id="PS00027">
    <property type="entry name" value="HOMEOBOX_1"/>
    <property type="match status" value="1"/>
</dbReference>
<dbReference type="PROSITE" id="PS50071">
    <property type="entry name" value="HOMEOBOX_2"/>
    <property type="match status" value="1"/>
</dbReference>
<protein>
    <recommendedName>
        <fullName evidence="2">Iroquois-class homeodomain protein irx-2</fullName>
    </recommendedName>
    <alternativeName>
        <fullName evidence="2">Iroquois homeobox protein 2</fullName>
    </alternativeName>
</protein>
<comment type="function">
    <text evidence="1 6">Acts partially redundantly with other irx members in neural patterning. Required for formation of the posterior forebrain, midbrain, hindbrain, and to a lesser extent, spinal cord. Acts early in neural plate development to induce expression of some but not all proneural genes, and specify a neural precursor state. Also up-regulates repressors that prevent neuronal differentiation. Patterns the neuroectoderm in both the anterior/posterior and dorsal/ventral axes. Probably dispensable for pronephric kidney development.</text>
</comment>
<comment type="subcellular location">
    <subcellularLocation>
        <location evidence="3 7">Nucleus</location>
    </subcellularLocation>
</comment>
<comment type="tissue specificity">
    <text evidence="6">Expressed in the neural plate in overlapping patterns with other irx members, which all share an anterior border of expression. Also expressed in the placodes. Broadly expressed in the tailbud rhombencephalon (hindbrain). Outside the nervous system and at tailbud stages, expressed in the developing otic vesicle, branchial arches, prospective heart region and pronephros.</text>
</comment>
<comment type="similarity">
    <text evidence="3">Belongs to the TALE/IRO homeobox family.</text>
</comment>
<gene>
    <name evidence="8" type="primary">irx2</name>
    <name evidence="1" type="synonym">iro2</name>
</gene>
<reference evidence="8" key="1">
    <citation type="submission" date="2004-08" db="EMBL/GenBank/DDBJ databases">
        <authorList>
            <consortium name="NIH - Xenopus Gene Collection (XGC) project"/>
        </authorList>
    </citation>
    <scope>NUCLEOTIDE SEQUENCE [LARGE SCALE MRNA]</scope>
    <source>
        <tissue evidence="8">Gastrula</tissue>
    </source>
</reference>
<reference evidence="7" key="2">
    <citation type="journal article" date="2009" name="Dev. Biol.">
        <title>The Xenopus Irx genes are essential for neural patterning and define the border between prethalamus and thalamus through mutual antagonism with the anterior repressors Fezf and Arx.</title>
        <authorList>
            <person name="Rodriguez-Seguel E."/>
            <person name="Alarcon P."/>
            <person name="Gomez-Skarmeta J.L."/>
        </authorList>
    </citation>
    <scope>FUNCTION</scope>
    <scope>TISSUE SPECIFICITY</scope>
</reference>
<organism>
    <name type="scientific">Xenopus tropicalis</name>
    <name type="common">Western clawed frog</name>
    <name type="synonym">Silurana tropicalis</name>
    <dbReference type="NCBI Taxonomy" id="8364"/>
    <lineage>
        <taxon>Eukaryota</taxon>
        <taxon>Metazoa</taxon>
        <taxon>Chordata</taxon>
        <taxon>Craniata</taxon>
        <taxon>Vertebrata</taxon>
        <taxon>Euteleostomi</taxon>
        <taxon>Amphibia</taxon>
        <taxon>Batrachia</taxon>
        <taxon>Anura</taxon>
        <taxon>Pipoidea</taxon>
        <taxon>Pipidae</taxon>
        <taxon>Xenopodinae</taxon>
        <taxon>Xenopus</taxon>
        <taxon>Silurana</taxon>
    </lineage>
</organism>
<proteinExistence type="evidence at transcript level"/>
<accession>Q66IK1</accession>
<sequence length="456" mass="49593">MSYPQGYLYQPPGSLALYSCPAYGASALAAPRSEELARSSSGSAFSPYPGSAAFTAQAATGFSSPLQYSSDPAGFPSYMGSPYDAHTTGMTGALSYHPYGSAAYPYQLNDPAYRKNATRDATATLKAWLQEHRKNPYPTKGEKIMLAIITKMTLTQVSTWFANARRRLKKENKMTWAPRNKSEDEDDDEGDGERVKEEQSEKAQDCNETSAEDEGISLHVDSLTDHSCSADSDGEKLPCRATDHLCESGSESKEKYDDDEDEEEGDEEDRVLPVKPATSSPLTGVEAPILNHQQDGSPRNSNKTSLDNGMSPSSQTPASKPKLWSLAEIATSDHKHSNLGSVLSSATSSAAHNPSYPSSSLLGRHIYYTSPFYSNYTNYGNFNALQSQGILRYSSAAVTANEGLNQTVLSTSSMHKHTSDSVRTASNQLDQHYRPTNFESKKDPSEVCTVGVQPYP</sequence>
<name>IRX2_XENTR</name>